<gene>
    <name type="primary">ydeP</name>
    <name type="ordered locus">SF1538</name>
    <name type="ordered locus">S1656</name>
</gene>
<dbReference type="EMBL" id="AE005674">
    <property type="protein sequence ID" value="AAN43127.1"/>
    <property type="molecule type" value="Genomic_DNA"/>
</dbReference>
<dbReference type="EMBL" id="AE014073">
    <property type="protein sequence ID" value="AAP17019.1"/>
    <property type="molecule type" value="Genomic_DNA"/>
</dbReference>
<dbReference type="RefSeq" id="NP_707420.1">
    <property type="nucleotide sequence ID" value="NC_004337.2"/>
</dbReference>
<dbReference type="RefSeq" id="WP_000726666.1">
    <property type="nucleotide sequence ID" value="NZ_WPGW01000224.1"/>
</dbReference>
<dbReference type="SMR" id="Q83RF3"/>
<dbReference type="STRING" id="198214.SF1538"/>
<dbReference type="PaxDb" id="198214-SF1538"/>
<dbReference type="GeneID" id="1024706"/>
<dbReference type="KEGG" id="sfl:SF1538"/>
<dbReference type="KEGG" id="sfx:S1656"/>
<dbReference type="PATRIC" id="fig|198214.7.peg.1815"/>
<dbReference type="HOGENOM" id="CLU_000422_16_1_6"/>
<dbReference type="Proteomes" id="UP000001006">
    <property type="component" value="Chromosome"/>
</dbReference>
<dbReference type="Proteomes" id="UP000002673">
    <property type="component" value="Chromosome"/>
</dbReference>
<dbReference type="GO" id="GO:0016020">
    <property type="term" value="C:membrane"/>
    <property type="evidence" value="ECO:0007669"/>
    <property type="project" value="TreeGrafter"/>
</dbReference>
<dbReference type="GO" id="GO:0051539">
    <property type="term" value="F:4 iron, 4 sulfur cluster binding"/>
    <property type="evidence" value="ECO:0007669"/>
    <property type="project" value="UniProtKB-KW"/>
</dbReference>
<dbReference type="GO" id="GO:0008863">
    <property type="term" value="F:formate dehydrogenase (NAD+) activity"/>
    <property type="evidence" value="ECO:0007669"/>
    <property type="project" value="InterPro"/>
</dbReference>
<dbReference type="GO" id="GO:0030151">
    <property type="term" value="F:molybdenum ion binding"/>
    <property type="evidence" value="ECO:0007669"/>
    <property type="project" value="InterPro"/>
</dbReference>
<dbReference type="CDD" id="cd02787">
    <property type="entry name" value="MopB_CT_ydeP"/>
    <property type="match status" value="1"/>
</dbReference>
<dbReference type="CDD" id="cd02767">
    <property type="entry name" value="MopB_ydeP"/>
    <property type="match status" value="1"/>
</dbReference>
<dbReference type="Gene3D" id="3.40.50.740">
    <property type="match status" value="1"/>
</dbReference>
<dbReference type="Gene3D" id="3.40.228.10">
    <property type="entry name" value="Dimethylsulfoxide Reductase, domain 2"/>
    <property type="match status" value="1"/>
</dbReference>
<dbReference type="InterPro" id="IPR009010">
    <property type="entry name" value="Asp_de-COase-like_dom_sf"/>
</dbReference>
<dbReference type="InterPro" id="IPR037951">
    <property type="entry name" value="MopB_CT_YdeP"/>
</dbReference>
<dbReference type="InterPro" id="IPR006656">
    <property type="entry name" value="Mopterin_OxRdtase"/>
</dbReference>
<dbReference type="InterPro" id="IPR010046">
    <property type="entry name" value="Mopterin_OxRdtse_a_bac"/>
</dbReference>
<dbReference type="InterPro" id="IPR050123">
    <property type="entry name" value="Prok_molybdopt-oxidoreductase"/>
</dbReference>
<dbReference type="InterPro" id="IPR041953">
    <property type="entry name" value="YdeP_MopB"/>
</dbReference>
<dbReference type="NCBIfam" id="TIGR01701">
    <property type="entry name" value="Fdhalpha-like"/>
    <property type="match status" value="1"/>
</dbReference>
<dbReference type="NCBIfam" id="NF007406">
    <property type="entry name" value="PRK09939.1"/>
    <property type="match status" value="1"/>
</dbReference>
<dbReference type="PANTHER" id="PTHR43105:SF4">
    <property type="entry name" value="PROTEIN YDEP"/>
    <property type="match status" value="1"/>
</dbReference>
<dbReference type="PANTHER" id="PTHR43105">
    <property type="entry name" value="RESPIRATORY NITRATE REDUCTASE"/>
    <property type="match status" value="1"/>
</dbReference>
<dbReference type="Pfam" id="PF00384">
    <property type="entry name" value="Molybdopterin"/>
    <property type="match status" value="1"/>
</dbReference>
<dbReference type="PIRSF" id="PIRSF000144">
    <property type="entry name" value="CbbBc"/>
    <property type="match status" value="1"/>
</dbReference>
<dbReference type="SUPFAM" id="SSF50692">
    <property type="entry name" value="ADC-like"/>
    <property type="match status" value="1"/>
</dbReference>
<dbReference type="SUPFAM" id="SSF53706">
    <property type="entry name" value="Formate dehydrogenase/DMSO reductase, domains 1-3"/>
    <property type="match status" value="1"/>
</dbReference>
<name>YDEP_SHIFL</name>
<accession>Q83RF3</accession>
<accession>Q7C1L5</accession>
<comment type="function">
    <text evidence="1">Probably involved in acid resistance.</text>
</comment>
<comment type="cofactor">
    <cofactor evidence="2">
        <name>[4Fe-4S] cluster</name>
        <dbReference type="ChEBI" id="CHEBI:49883"/>
    </cofactor>
    <text evidence="2">Binds 1 [4Fe-4S] cluster.</text>
</comment>
<comment type="cofactor">
    <cofactor evidence="1">
        <name>Mo-bis(molybdopterin guanine dinucleotide)</name>
        <dbReference type="ChEBI" id="CHEBI:60539"/>
    </cofactor>
    <text evidence="1">Binds 1 molybdenum-bis(molybdopterin guanine dinucleotide) (Mo-bis-MGD) cofactor per subunit.</text>
</comment>
<comment type="induction">
    <text evidence="1">By EvgA.</text>
</comment>
<comment type="similarity">
    <text evidence="2">Belongs to the prokaryotic molybdopterin-containing oxidoreductase family.</text>
</comment>
<proteinExistence type="inferred from homology"/>
<sequence length="759" mass="83450">MKKKIESYQGAAGGWGAVKSVANAVRKQMDIRHDVIAMFDMNKPEGFDCPGCAWPDPKNSASFDICENGAKAIAWEVTDKQVNASFFAENTVQSLLTWGDHELEAAGRLTQPLKYDAVSDCYKPLSWQQAFDEIGARLQSYSDPNQVEFYTSGRTSNEAAFLYQLFAREYGSNNFPDCSNMCHEPTSVGLAASIGVGKGTVLLEDFEKCDLVICIGHNPGTNHPRMLTSLRALVKRGAKMIAINPLQERGLERFTAPQNPFEMLTNSETQLASAYYNVRIGGDMALLKGMMRLLIERDDAASAAGRPSLLDDEFIQTHTVGFDELRRDVLNSEWKDIERISGLSQTQIAELADAYAAAERTIICYGMGITQHEHGTQNVQQLVNLLLMKGNIGKPGAGICPLRGHSNVQGDRTVGITEKPSAEFLARLGERYGFPPPHAPGHAAIASMQAICTGQARALICMGGNFALAMPDREASAVPLTQLDLAVHVATKLNRSHLLTARHSYILPVLGRSEIDMQKSGAQAVTVEDSMSMIHASRGVLKPAGVMLKSECAVVAGIAQAALPQSVVAWEYLVEDYDRIRNDIEAVLPEFADYNQRIRHPGGFHLINAAAERRWMTPSGKANFITSKGLLEDPSSAFNSKLVMATVRSHDQYNTTIYGMDDRYRGVFGQRDVVFMSAKQAKICRVKNGERVNLIALTPDGKRSSRRMDRLKVVIYPMADRSLVTYFPESNHMLTLDNHDPLSGIPGYKSIPVELEPSN</sequence>
<keyword id="KW-0004">4Fe-4S</keyword>
<keyword id="KW-0408">Iron</keyword>
<keyword id="KW-0411">Iron-sulfur</keyword>
<keyword id="KW-0479">Metal-binding</keyword>
<keyword id="KW-0500">Molybdenum</keyword>
<keyword id="KW-0560">Oxidoreductase</keyword>
<keyword id="KW-1185">Reference proteome</keyword>
<reference key="1">
    <citation type="journal article" date="2002" name="Nucleic Acids Res.">
        <title>Genome sequence of Shigella flexneri 2a: insights into pathogenicity through comparison with genomes of Escherichia coli K12 and O157.</title>
        <authorList>
            <person name="Jin Q."/>
            <person name="Yuan Z."/>
            <person name="Xu J."/>
            <person name="Wang Y."/>
            <person name="Shen Y."/>
            <person name="Lu W."/>
            <person name="Wang J."/>
            <person name="Liu H."/>
            <person name="Yang J."/>
            <person name="Yang F."/>
            <person name="Zhang X."/>
            <person name="Zhang J."/>
            <person name="Yang G."/>
            <person name="Wu H."/>
            <person name="Qu D."/>
            <person name="Dong J."/>
            <person name="Sun L."/>
            <person name="Xue Y."/>
            <person name="Zhao A."/>
            <person name="Gao Y."/>
            <person name="Zhu J."/>
            <person name="Kan B."/>
            <person name="Ding K."/>
            <person name="Chen S."/>
            <person name="Cheng H."/>
            <person name="Yao Z."/>
            <person name="He B."/>
            <person name="Chen R."/>
            <person name="Ma D."/>
            <person name="Qiang B."/>
            <person name="Wen Y."/>
            <person name="Hou Y."/>
            <person name="Yu J."/>
        </authorList>
    </citation>
    <scope>NUCLEOTIDE SEQUENCE [LARGE SCALE GENOMIC DNA]</scope>
    <source>
        <strain>301 / Serotype 2a</strain>
    </source>
</reference>
<reference key="2">
    <citation type="journal article" date="2003" name="Infect. Immun.">
        <title>Complete genome sequence and comparative genomics of Shigella flexneri serotype 2a strain 2457T.</title>
        <authorList>
            <person name="Wei J."/>
            <person name="Goldberg M.B."/>
            <person name="Burland V."/>
            <person name="Venkatesan M.M."/>
            <person name="Deng W."/>
            <person name="Fournier G."/>
            <person name="Mayhew G.F."/>
            <person name="Plunkett G. III"/>
            <person name="Rose D.J."/>
            <person name="Darling A."/>
            <person name="Mau B."/>
            <person name="Perna N.T."/>
            <person name="Payne S.M."/>
            <person name="Runyen-Janecky L.J."/>
            <person name="Zhou S."/>
            <person name="Schwartz D.C."/>
            <person name="Blattner F.R."/>
        </authorList>
    </citation>
    <scope>NUCLEOTIDE SEQUENCE [LARGE SCALE GENOMIC DNA]</scope>
    <source>
        <strain>ATCC 700930 / 2457T / Serotype 2a</strain>
    </source>
</reference>
<evidence type="ECO:0000250" key="1"/>
<evidence type="ECO:0000305" key="2"/>
<feature type="chain" id="PRO_0000063230" description="Protein YdeP">
    <location>
        <begin position="1"/>
        <end position="759"/>
    </location>
</feature>
<feature type="binding site" evidence="1">
    <location>
        <position position="49"/>
    </location>
    <ligand>
        <name>[4Fe-4S] cluster</name>
        <dbReference type="ChEBI" id="CHEBI:49883"/>
    </ligand>
</feature>
<feature type="binding site" evidence="1">
    <location>
        <position position="52"/>
    </location>
    <ligand>
        <name>[4Fe-4S] cluster</name>
        <dbReference type="ChEBI" id="CHEBI:49883"/>
    </ligand>
</feature>
<organism>
    <name type="scientific">Shigella flexneri</name>
    <dbReference type="NCBI Taxonomy" id="623"/>
    <lineage>
        <taxon>Bacteria</taxon>
        <taxon>Pseudomonadati</taxon>
        <taxon>Pseudomonadota</taxon>
        <taxon>Gammaproteobacteria</taxon>
        <taxon>Enterobacterales</taxon>
        <taxon>Enterobacteriaceae</taxon>
        <taxon>Shigella</taxon>
    </lineage>
</organism>
<protein>
    <recommendedName>
        <fullName>Protein YdeP</fullName>
    </recommendedName>
</protein>